<proteinExistence type="predicted"/>
<accession>P75974</accession>
<dbReference type="EMBL" id="U00096">
    <property type="protein sequence ID" value="AAC74229.1"/>
    <property type="molecule type" value="Genomic_DNA"/>
</dbReference>
<dbReference type="EMBL" id="AP009048">
    <property type="protein sequence ID" value="BAA35971.1"/>
    <property type="molecule type" value="Genomic_DNA"/>
</dbReference>
<dbReference type="PIR" id="F64859">
    <property type="entry name" value="F64859"/>
</dbReference>
<dbReference type="RefSeq" id="NP_415663.1">
    <property type="nucleotide sequence ID" value="NC_000913.3"/>
</dbReference>
<dbReference type="RefSeq" id="WP_000848748.1">
    <property type="nucleotide sequence ID" value="NZ_CP064683.1"/>
</dbReference>
<dbReference type="SMR" id="P75974"/>
<dbReference type="DIP" id="DIP-12721N"/>
<dbReference type="FunCoup" id="P75974">
    <property type="interactions" value="15"/>
</dbReference>
<dbReference type="STRING" id="511145.b1145"/>
<dbReference type="MEROPS" id="S24.A20"/>
<dbReference type="jPOST" id="P75974"/>
<dbReference type="PaxDb" id="511145-b1145"/>
<dbReference type="EnsemblBacteria" id="AAC74229">
    <property type="protein sequence ID" value="AAC74229"/>
    <property type="gene ID" value="b1145"/>
</dbReference>
<dbReference type="GeneID" id="945719"/>
<dbReference type="KEGG" id="ecj:JW1131"/>
<dbReference type="KEGG" id="eco:b1145"/>
<dbReference type="PATRIC" id="fig|511145.12.peg.1187"/>
<dbReference type="EchoBASE" id="EB3997"/>
<dbReference type="eggNOG" id="COG1974">
    <property type="taxonomic scope" value="Bacteria"/>
</dbReference>
<dbReference type="HOGENOM" id="CLU_066192_1_3_6"/>
<dbReference type="InParanoid" id="P75974"/>
<dbReference type="OMA" id="RAIDRWY"/>
<dbReference type="PhylomeDB" id="P75974"/>
<dbReference type="BioCyc" id="EcoCyc:G6589-MONOMER"/>
<dbReference type="PRO" id="PR:P75974"/>
<dbReference type="Proteomes" id="UP000000625">
    <property type="component" value="Chromosome"/>
</dbReference>
<dbReference type="GO" id="GO:0032993">
    <property type="term" value="C:protein-DNA complex"/>
    <property type="evidence" value="ECO:0000318"/>
    <property type="project" value="GO_Central"/>
</dbReference>
<dbReference type="GO" id="GO:0001217">
    <property type="term" value="F:DNA-binding transcription repressor activity"/>
    <property type="evidence" value="ECO:0000318"/>
    <property type="project" value="GO_Central"/>
</dbReference>
<dbReference type="GO" id="GO:0043565">
    <property type="term" value="F:sequence-specific DNA binding"/>
    <property type="evidence" value="ECO:0000318"/>
    <property type="project" value="GO_Central"/>
</dbReference>
<dbReference type="GO" id="GO:0045892">
    <property type="term" value="P:negative regulation of DNA-templated transcription"/>
    <property type="evidence" value="ECO:0000318"/>
    <property type="project" value="GO_Central"/>
</dbReference>
<dbReference type="GO" id="GO:0009432">
    <property type="term" value="P:SOS response"/>
    <property type="evidence" value="ECO:0000318"/>
    <property type="project" value="GO_Central"/>
</dbReference>
<dbReference type="CDD" id="cd06529">
    <property type="entry name" value="S24_LexA-like"/>
    <property type="match status" value="1"/>
</dbReference>
<dbReference type="Gene3D" id="2.10.109.10">
    <property type="entry name" value="Umud Fragment, subunit A"/>
    <property type="match status" value="1"/>
</dbReference>
<dbReference type="InterPro" id="IPR039418">
    <property type="entry name" value="LexA-like"/>
</dbReference>
<dbReference type="InterPro" id="IPR036286">
    <property type="entry name" value="LexA/Signal_pep-like_sf"/>
</dbReference>
<dbReference type="InterPro" id="IPR050077">
    <property type="entry name" value="LexA_repressor"/>
</dbReference>
<dbReference type="InterPro" id="IPR015927">
    <property type="entry name" value="Peptidase_S24_S26A/B/C"/>
</dbReference>
<dbReference type="PANTHER" id="PTHR33516">
    <property type="entry name" value="LEXA REPRESSOR"/>
    <property type="match status" value="1"/>
</dbReference>
<dbReference type="PANTHER" id="PTHR33516:SF2">
    <property type="entry name" value="LEXA REPRESSOR-RELATED"/>
    <property type="match status" value="1"/>
</dbReference>
<dbReference type="Pfam" id="PF00717">
    <property type="entry name" value="Peptidase_S24"/>
    <property type="match status" value="1"/>
</dbReference>
<dbReference type="SUPFAM" id="SSF51306">
    <property type="entry name" value="LexA/Signal peptidase"/>
    <property type="match status" value="1"/>
</dbReference>
<gene>
    <name type="primary">cohE</name>
    <name type="synonym">ymfK</name>
    <name type="ordered locus">b1145</name>
    <name type="ordered locus">JW1131</name>
</gene>
<protein>
    <recommendedName>
        <fullName evidence="1">Prophage repressor CohE</fullName>
    </recommendedName>
    <alternativeName>
        <fullName>Putative lambdoid prophage e14 repressor protein C2</fullName>
    </alternativeName>
</protein>
<name>COHE_ECOLI</name>
<comment type="miscellaneous">
    <text>This protein is part of the e14 prophage present on the genomes of E.coli K12 MG1655 and W3110.</text>
</comment>
<reference key="1">
    <citation type="journal article" date="1996" name="DNA Res.">
        <title>A 718-kb DNA sequence of the Escherichia coli K-12 genome corresponding to the 12.7-28.0 min region on the linkage map.</title>
        <authorList>
            <person name="Oshima T."/>
            <person name="Aiba H."/>
            <person name="Baba T."/>
            <person name="Fujita K."/>
            <person name="Hayashi K."/>
            <person name="Honjo A."/>
            <person name="Ikemoto K."/>
            <person name="Inada T."/>
            <person name="Itoh T."/>
            <person name="Kajihara M."/>
            <person name="Kanai K."/>
            <person name="Kashimoto K."/>
            <person name="Kimura S."/>
            <person name="Kitagawa M."/>
            <person name="Makino K."/>
            <person name="Masuda S."/>
            <person name="Miki T."/>
            <person name="Mizobuchi K."/>
            <person name="Mori H."/>
            <person name="Motomura K."/>
            <person name="Nakamura Y."/>
            <person name="Nashimoto H."/>
            <person name="Nishio Y."/>
            <person name="Saito N."/>
            <person name="Sampei G."/>
            <person name="Seki Y."/>
            <person name="Tagami H."/>
            <person name="Takemoto K."/>
            <person name="Wada C."/>
            <person name="Yamamoto Y."/>
            <person name="Yano M."/>
            <person name="Horiuchi T."/>
        </authorList>
    </citation>
    <scope>NUCLEOTIDE SEQUENCE [LARGE SCALE GENOMIC DNA]</scope>
    <source>
        <strain>K12 / W3110 / ATCC 27325 / DSM 5911</strain>
    </source>
</reference>
<reference key="2">
    <citation type="journal article" date="1997" name="Science">
        <title>The complete genome sequence of Escherichia coli K-12.</title>
        <authorList>
            <person name="Blattner F.R."/>
            <person name="Plunkett G. III"/>
            <person name="Bloch C.A."/>
            <person name="Perna N.T."/>
            <person name="Burland V."/>
            <person name="Riley M."/>
            <person name="Collado-Vides J."/>
            <person name="Glasner J.D."/>
            <person name="Rode C.K."/>
            <person name="Mayhew G.F."/>
            <person name="Gregor J."/>
            <person name="Davis N.W."/>
            <person name="Kirkpatrick H.A."/>
            <person name="Goeden M.A."/>
            <person name="Rose D.J."/>
            <person name="Mau B."/>
            <person name="Shao Y."/>
        </authorList>
    </citation>
    <scope>NUCLEOTIDE SEQUENCE [LARGE SCALE GENOMIC DNA]</scope>
    <source>
        <strain>K12 / MG1655 / ATCC 47076</strain>
    </source>
</reference>
<reference key="3">
    <citation type="journal article" date="2006" name="Mol. Syst. Biol.">
        <title>Highly accurate genome sequences of Escherichia coli K-12 strains MG1655 and W3110.</title>
        <authorList>
            <person name="Hayashi K."/>
            <person name="Morooka N."/>
            <person name="Yamamoto Y."/>
            <person name="Fujita K."/>
            <person name="Isono K."/>
            <person name="Choi S."/>
            <person name="Ohtsubo E."/>
            <person name="Baba T."/>
            <person name="Wanner B.L."/>
            <person name="Mori H."/>
            <person name="Horiuchi T."/>
        </authorList>
    </citation>
    <scope>NUCLEOTIDE SEQUENCE [LARGE SCALE GENOMIC DNA]</scope>
    <source>
        <strain>K12 / W3110 / ATCC 27325 / DSM 5911</strain>
    </source>
</reference>
<organism>
    <name type="scientific">Escherichia coli (strain K12)</name>
    <dbReference type="NCBI Taxonomy" id="83333"/>
    <lineage>
        <taxon>Bacteria</taxon>
        <taxon>Pseudomonadati</taxon>
        <taxon>Pseudomonadota</taxon>
        <taxon>Gammaproteobacteria</taxon>
        <taxon>Enterobacterales</taxon>
        <taxon>Enterobacteriaceae</taxon>
        <taxon>Escherichia</taxon>
    </lineage>
</organism>
<feature type="chain" id="PRO_0000149718" description="Prophage repressor CohE">
    <location>
        <begin position="1"/>
        <end position="224"/>
    </location>
</feature>
<evidence type="ECO:0000305" key="1"/>
<sequence length="224" mass="25095">MKTIHDIRRSNARKLRDGVGGNSSFATMIDREPTQTSRFMGDGATKNIGDSMARHIEKCFDLPVGWLDQEHQTTNITKKPDVSITNKQITLVPVISWVQAGAWKEVGYSEVDLSTAETYPCPVPCGEMTYILRVIGDSMIDEYRPGDMIFVDPEVPACHGDDVIALMHDTGETTFKRLIEDGTQRYLKALNPNWPEPYIKINGNCSIIGTVIFSGKPRRYKIKA</sequence>
<keyword id="KW-0238">DNA-binding</keyword>
<keyword id="KW-1185">Reference proteome</keyword>
<keyword id="KW-0678">Repressor</keyword>
<keyword id="KW-0804">Transcription</keyword>
<keyword id="KW-0805">Transcription regulation</keyword>